<sequence>MRFFIDTANVEDIKKAHKMGILDGVTTNPSLVAKEGVDFHTRLREICEIVGDVSVSAEVIALDAEGMIREGKELAQIAPNITVKVPMTPAGLEAVAALSKENITTNVTLIFNPNQALLAARAGATYVSPFLGRLDDIGQDGMGLVETIAQIFVIHDIPTQIIAASVRNPVHVTNAALAGADIATIPLNVIESLTQHPLTTQGIERFLADWEKAQQ</sequence>
<organism>
    <name type="scientific">Exiguobacterium sibiricum (strain DSM 17290 / CCUG 55495 / CIP 109462 / JCM 13490 / 255-15)</name>
    <dbReference type="NCBI Taxonomy" id="262543"/>
    <lineage>
        <taxon>Bacteria</taxon>
        <taxon>Bacillati</taxon>
        <taxon>Bacillota</taxon>
        <taxon>Bacilli</taxon>
        <taxon>Bacillales</taxon>
        <taxon>Bacillales Family XII. Incertae Sedis</taxon>
        <taxon>Exiguobacterium</taxon>
    </lineage>
</organism>
<protein>
    <recommendedName>
        <fullName evidence="1">Probable transaldolase</fullName>
        <ecNumber evidence="1">2.2.1.2</ecNumber>
    </recommendedName>
</protein>
<accession>B1YEL0</accession>
<reference key="1">
    <citation type="submission" date="2008-04" db="EMBL/GenBank/DDBJ databases">
        <title>Complete sequence of chromosome of Exiguobacterium sibiricum 255-15.</title>
        <authorList>
            <consortium name="US DOE Joint Genome Institute"/>
            <person name="Copeland A."/>
            <person name="Lucas S."/>
            <person name="Lapidus A."/>
            <person name="Glavina del Rio T."/>
            <person name="Dalin E."/>
            <person name="Tice H."/>
            <person name="Bruce D."/>
            <person name="Goodwin L."/>
            <person name="Pitluck S."/>
            <person name="Kiss H."/>
            <person name="Chertkov O."/>
            <person name="Monk C."/>
            <person name="Brettin T."/>
            <person name="Detter J.C."/>
            <person name="Han C."/>
            <person name="Kuske C.R."/>
            <person name="Schmutz J."/>
            <person name="Larimer F."/>
            <person name="Land M."/>
            <person name="Hauser L."/>
            <person name="Kyrpides N."/>
            <person name="Mikhailova N."/>
            <person name="Vishnivetskaya T."/>
            <person name="Rodrigues D.F."/>
            <person name="Gilichinsky D."/>
            <person name="Tiedje J."/>
            <person name="Richardson P."/>
        </authorList>
    </citation>
    <scope>NUCLEOTIDE SEQUENCE [LARGE SCALE GENOMIC DNA]</scope>
    <source>
        <strain>DSM 17290 / CCUG 55495 / CIP 109462 / JCM 13490 / 255-15</strain>
    </source>
</reference>
<evidence type="ECO:0000255" key="1">
    <source>
        <dbReference type="HAMAP-Rule" id="MF_00494"/>
    </source>
</evidence>
<feature type="chain" id="PRO_1000126314" description="Probable transaldolase">
    <location>
        <begin position="1"/>
        <end position="215"/>
    </location>
</feature>
<feature type="active site" description="Schiff-base intermediate with substrate" evidence="1">
    <location>
        <position position="84"/>
    </location>
</feature>
<comment type="function">
    <text evidence="1">Transaldolase is important for the balance of metabolites in the pentose-phosphate pathway.</text>
</comment>
<comment type="catalytic activity">
    <reaction evidence="1">
        <text>D-sedoheptulose 7-phosphate + D-glyceraldehyde 3-phosphate = D-erythrose 4-phosphate + beta-D-fructose 6-phosphate</text>
        <dbReference type="Rhea" id="RHEA:17053"/>
        <dbReference type="ChEBI" id="CHEBI:16897"/>
        <dbReference type="ChEBI" id="CHEBI:57483"/>
        <dbReference type="ChEBI" id="CHEBI:57634"/>
        <dbReference type="ChEBI" id="CHEBI:59776"/>
        <dbReference type="EC" id="2.2.1.2"/>
    </reaction>
</comment>
<comment type="pathway">
    <text evidence="1">Carbohydrate degradation; pentose phosphate pathway; D-glyceraldehyde 3-phosphate and beta-D-fructose 6-phosphate from D-ribose 5-phosphate and D-xylulose 5-phosphate (non-oxidative stage): step 2/3.</text>
</comment>
<comment type="subcellular location">
    <subcellularLocation>
        <location evidence="1">Cytoplasm</location>
    </subcellularLocation>
</comment>
<comment type="similarity">
    <text evidence="1">Belongs to the transaldolase family. Type 3B subfamily.</text>
</comment>
<keyword id="KW-0963">Cytoplasm</keyword>
<keyword id="KW-0570">Pentose shunt</keyword>
<keyword id="KW-1185">Reference proteome</keyword>
<keyword id="KW-0704">Schiff base</keyword>
<keyword id="KW-0808">Transferase</keyword>
<name>TAL_EXIS2</name>
<dbReference type="EC" id="2.2.1.2" evidence="1"/>
<dbReference type="EMBL" id="CP001022">
    <property type="protein sequence ID" value="ACB62178.1"/>
    <property type="molecule type" value="Genomic_DNA"/>
</dbReference>
<dbReference type="SMR" id="B1YEL0"/>
<dbReference type="STRING" id="262543.Exig_2730"/>
<dbReference type="KEGG" id="esi:Exig_2730"/>
<dbReference type="eggNOG" id="COG0176">
    <property type="taxonomic scope" value="Bacteria"/>
</dbReference>
<dbReference type="HOGENOM" id="CLU_079764_0_0_9"/>
<dbReference type="OrthoDB" id="9807051at2"/>
<dbReference type="UniPathway" id="UPA00115">
    <property type="reaction ID" value="UER00414"/>
</dbReference>
<dbReference type="Proteomes" id="UP000001681">
    <property type="component" value="Chromosome"/>
</dbReference>
<dbReference type="GO" id="GO:0005737">
    <property type="term" value="C:cytoplasm"/>
    <property type="evidence" value="ECO:0007669"/>
    <property type="project" value="UniProtKB-SubCell"/>
</dbReference>
<dbReference type="GO" id="GO:0016832">
    <property type="term" value="F:aldehyde-lyase activity"/>
    <property type="evidence" value="ECO:0007669"/>
    <property type="project" value="InterPro"/>
</dbReference>
<dbReference type="GO" id="GO:0004801">
    <property type="term" value="F:transaldolase activity"/>
    <property type="evidence" value="ECO:0007669"/>
    <property type="project" value="UniProtKB-UniRule"/>
</dbReference>
<dbReference type="GO" id="GO:0005975">
    <property type="term" value="P:carbohydrate metabolic process"/>
    <property type="evidence" value="ECO:0007669"/>
    <property type="project" value="InterPro"/>
</dbReference>
<dbReference type="GO" id="GO:0006098">
    <property type="term" value="P:pentose-phosphate shunt"/>
    <property type="evidence" value="ECO:0007669"/>
    <property type="project" value="UniProtKB-UniRule"/>
</dbReference>
<dbReference type="CDD" id="cd00956">
    <property type="entry name" value="Transaldolase_FSA"/>
    <property type="match status" value="1"/>
</dbReference>
<dbReference type="FunFam" id="3.20.20.70:FF:000018">
    <property type="entry name" value="Probable transaldolase"/>
    <property type="match status" value="1"/>
</dbReference>
<dbReference type="Gene3D" id="3.20.20.70">
    <property type="entry name" value="Aldolase class I"/>
    <property type="match status" value="1"/>
</dbReference>
<dbReference type="HAMAP" id="MF_00494">
    <property type="entry name" value="Transaldolase_3b"/>
    <property type="match status" value="1"/>
</dbReference>
<dbReference type="InterPro" id="IPR013785">
    <property type="entry name" value="Aldolase_TIM"/>
</dbReference>
<dbReference type="InterPro" id="IPR001585">
    <property type="entry name" value="TAL/FSA"/>
</dbReference>
<dbReference type="InterPro" id="IPR022999">
    <property type="entry name" value="Transaldolase_3B"/>
</dbReference>
<dbReference type="InterPro" id="IPR004731">
    <property type="entry name" value="Transaldolase_3B/F6P_aldolase"/>
</dbReference>
<dbReference type="InterPro" id="IPR018225">
    <property type="entry name" value="Transaldolase_AS"/>
</dbReference>
<dbReference type="InterPro" id="IPR033919">
    <property type="entry name" value="TSA/FSA_arc/bac"/>
</dbReference>
<dbReference type="NCBIfam" id="TIGR00875">
    <property type="entry name" value="fsa_talC_mipB"/>
    <property type="match status" value="1"/>
</dbReference>
<dbReference type="PANTHER" id="PTHR10683">
    <property type="entry name" value="TRANSALDOLASE"/>
    <property type="match status" value="1"/>
</dbReference>
<dbReference type="PANTHER" id="PTHR10683:SF36">
    <property type="entry name" value="TRANSALDOLASE"/>
    <property type="match status" value="1"/>
</dbReference>
<dbReference type="Pfam" id="PF00923">
    <property type="entry name" value="TAL_FSA"/>
    <property type="match status" value="1"/>
</dbReference>
<dbReference type="SUPFAM" id="SSF51569">
    <property type="entry name" value="Aldolase"/>
    <property type="match status" value="1"/>
</dbReference>
<dbReference type="PROSITE" id="PS01054">
    <property type="entry name" value="TRANSALDOLASE_1"/>
    <property type="match status" value="1"/>
</dbReference>
<proteinExistence type="inferred from homology"/>
<gene>
    <name evidence="1" type="primary">tal</name>
    <name type="ordered locus">Exig_2730</name>
</gene>